<gene>
    <name evidence="1" type="primary">nrdI</name>
    <name type="ordered locus">Mfl529</name>
</gene>
<reference key="1">
    <citation type="submission" date="2004-06" db="EMBL/GenBank/DDBJ databases">
        <authorList>
            <person name="Birren B.W."/>
            <person name="Stange-Thomann N."/>
            <person name="Hafez N."/>
            <person name="DeCaprio D."/>
            <person name="Fisher S."/>
            <person name="Butler J."/>
            <person name="Elkins T."/>
            <person name="Kodira C.D."/>
            <person name="Major J."/>
            <person name="Wang S."/>
            <person name="Nicol R."/>
            <person name="Nusbaum C."/>
        </authorList>
    </citation>
    <scope>NUCLEOTIDE SEQUENCE [LARGE SCALE GENOMIC DNA]</scope>
    <source>
        <strain>ATCC 33453 / NBRC 100688 / NCTC 11704 / L1</strain>
    </source>
</reference>
<accession>Q6F0T6</accession>
<proteinExistence type="inferred from homology"/>
<feature type="chain" id="PRO_1000016505" description="Protein NrdI">
    <location>
        <begin position="1"/>
        <end position="151"/>
    </location>
</feature>
<name>NRDI_MESFL</name>
<keyword id="KW-1185">Reference proteome</keyword>
<comment type="function">
    <text evidence="1">Probably involved in ribonucleotide reductase function.</text>
</comment>
<comment type="similarity">
    <text evidence="1">Belongs to the NrdI family.</text>
</comment>
<dbReference type="EMBL" id="AE017263">
    <property type="protein sequence ID" value="AAT75887.1"/>
    <property type="molecule type" value="Genomic_DNA"/>
</dbReference>
<dbReference type="RefSeq" id="WP_011183427.1">
    <property type="nucleotide sequence ID" value="NC_006055.1"/>
</dbReference>
<dbReference type="RefSeq" id="YP_053771.1">
    <property type="nucleotide sequence ID" value="NC_006055.1"/>
</dbReference>
<dbReference type="SMR" id="Q6F0T6"/>
<dbReference type="STRING" id="265311.Mfl529"/>
<dbReference type="PaxDb" id="265311-Mfl529"/>
<dbReference type="EnsemblBacteria" id="AAT75887">
    <property type="protein sequence ID" value="AAT75887"/>
    <property type="gene ID" value="Mfl529"/>
</dbReference>
<dbReference type="GeneID" id="2898098"/>
<dbReference type="KEGG" id="mfl:Mfl529"/>
<dbReference type="PATRIC" id="fig|265311.5.peg.533"/>
<dbReference type="eggNOG" id="COG1780">
    <property type="taxonomic scope" value="Bacteria"/>
</dbReference>
<dbReference type="HOGENOM" id="CLU_114845_0_0_14"/>
<dbReference type="OrthoDB" id="350535at2"/>
<dbReference type="Proteomes" id="UP000006647">
    <property type="component" value="Chromosome"/>
</dbReference>
<dbReference type="GO" id="GO:0010181">
    <property type="term" value="F:FMN binding"/>
    <property type="evidence" value="ECO:0007669"/>
    <property type="project" value="InterPro"/>
</dbReference>
<dbReference type="GO" id="GO:0036211">
    <property type="term" value="P:protein modification process"/>
    <property type="evidence" value="ECO:0007669"/>
    <property type="project" value="InterPro"/>
</dbReference>
<dbReference type="Gene3D" id="3.40.50.360">
    <property type="match status" value="1"/>
</dbReference>
<dbReference type="HAMAP" id="MF_00128">
    <property type="entry name" value="NrdI"/>
    <property type="match status" value="1"/>
</dbReference>
<dbReference type="InterPro" id="IPR029039">
    <property type="entry name" value="Flavoprotein-like_sf"/>
</dbReference>
<dbReference type="InterPro" id="IPR020852">
    <property type="entry name" value="RNR_Ib_NrdI_bac"/>
</dbReference>
<dbReference type="InterPro" id="IPR004465">
    <property type="entry name" value="RNR_NrdI"/>
</dbReference>
<dbReference type="NCBIfam" id="TIGR00333">
    <property type="entry name" value="nrdI"/>
    <property type="match status" value="1"/>
</dbReference>
<dbReference type="PANTHER" id="PTHR37297">
    <property type="entry name" value="PROTEIN NRDI"/>
    <property type="match status" value="1"/>
</dbReference>
<dbReference type="PANTHER" id="PTHR37297:SF1">
    <property type="entry name" value="PROTEIN NRDI"/>
    <property type="match status" value="1"/>
</dbReference>
<dbReference type="Pfam" id="PF07972">
    <property type="entry name" value="Flavodoxin_NdrI"/>
    <property type="match status" value="1"/>
</dbReference>
<dbReference type="PIRSF" id="PIRSF005087">
    <property type="entry name" value="NrdI"/>
    <property type="match status" value="1"/>
</dbReference>
<dbReference type="SUPFAM" id="SSF52218">
    <property type="entry name" value="Flavoproteins"/>
    <property type="match status" value="1"/>
</dbReference>
<organism>
    <name type="scientific">Mesoplasma florum (strain ATCC 33453 / NBRC 100688 / NCTC 11704 / L1)</name>
    <name type="common">Acholeplasma florum</name>
    <dbReference type="NCBI Taxonomy" id="265311"/>
    <lineage>
        <taxon>Bacteria</taxon>
        <taxon>Bacillati</taxon>
        <taxon>Mycoplasmatota</taxon>
        <taxon>Mollicutes</taxon>
        <taxon>Entomoplasmatales</taxon>
        <taxon>Entomoplasmataceae</taxon>
        <taxon>Mesoplasma</taxon>
    </lineage>
</organism>
<sequence length="151" mass="16987">MHDDIKLVSGEEIVKPTGEVHVVYFSSISNNTHRFIQKLSVKNSRIPYELEEEINVDSDYVLITPTYSGGGEFTSGAVPKQVIKFLNKENNRNYCRGVIASGNTNFGNTFAMAGPILSKKLNVPLLYQFELLGTQNDVEKINEILKEFWGK</sequence>
<protein>
    <recommendedName>
        <fullName evidence="1">Protein NrdI</fullName>
    </recommendedName>
</protein>
<evidence type="ECO:0000255" key="1">
    <source>
        <dbReference type="HAMAP-Rule" id="MF_00128"/>
    </source>
</evidence>